<accession>P9WPV8</accession>
<accession>L0TD49</accession>
<accession>P63652</accession>
<accession>P71848</accession>
<name>IPDB_MYCTO</name>
<gene>
    <name evidence="1" type="primary">ipdB</name>
    <name type="ordered locus">MT3656</name>
</gene>
<sequence length="250" mass="27393">MSTRAEVCAVACAELFRDAGEIMISPMTNMASVGARLARLTFAPDILLTDGEAQLLADTPALGKTGAPNRIEGWMPFGRVFETLAWGRRHVVMGANQVDRYGNQNISAFGPLQRPTRQMFGVRGSPGNTINHATSYWVGNHCKRVFVEAVDVVSGIGYDKVDPDNPAFRFVNVYRVVSNLGVFDFGGPDHSMRAVSLHPGVTPGDVRDATSFEVHDLDAAEQTRLPTDDELHLIRAVIDPKSLRDREIRS</sequence>
<organism>
    <name type="scientific">Mycobacterium tuberculosis (strain CDC 1551 / Oshkosh)</name>
    <dbReference type="NCBI Taxonomy" id="83331"/>
    <lineage>
        <taxon>Bacteria</taxon>
        <taxon>Bacillati</taxon>
        <taxon>Actinomycetota</taxon>
        <taxon>Actinomycetes</taxon>
        <taxon>Mycobacteriales</taxon>
        <taxon>Mycobacteriaceae</taxon>
        <taxon>Mycobacterium</taxon>
        <taxon>Mycobacterium tuberculosis complex</taxon>
    </lineage>
</organism>
<keyword id="KW-0153">Cholesterol metabolism</keyword>
<keyword id="KW-0443">Lipid metabolism</keyword>
<keyword id="KW-0456">Lyase</keyword>
<keyword id="KW-1185">Reference proteome</keyword>
<keyword id="KW-0753">Steroid metabolism</keyword>
<keyword id="KW-1207">Sterol metabolism</keyword>
<evidence type="ECO:0000250" key="1">
    <source>
        <dbReference type="UniProtKB" id="P9WPV9"/>
    </source>
</evidence>
<evidence type="ECO:0000305" key="2"/>
<dbReference type="EC" id="4.1.99.-" evidence="1"/>
<dbReference type="EMBL" id="AE000516">
    <property type="protein sequence ID" value="AAK48016.1"/>
    <property type="molecule type" value="Genomic_DNA"/>
</dbReference>
<dbReference type="PIR" id="A70678">
    <property type="entry name" value="A70678"/>
</dbReference>
<dbReference type="RefSeq" id="WP_003419321.1">
    <property type="nucleotide sequence ID" value="NZ_KK341227.1"/>
</dbReference>
<dbReference type="SMR" id="P9WPV8"/>
<dbReference type="GeneID" id="45427536"/>
<dbReference type="KEGG" id="mtc:MT3656"/>
<dbReference type="PATRIC" id="fig|83331.31.peg.3937"/>
<dbReference type="HOGENOM" id="CLU_069088_0_0_11"/>
<dbReference type="UniPathway" id="UPA01058"/>
<dbReference type="Proteomes" id="UP000001020">
    <property type="component" value="Chromosome"/>
</dbReference>
<dbReference type="GO" id="GO:0008410">
    <property type="term" value="F:CoA-transferase activity"/>
    <property type="evidence" value="ECO:0007669"/>
    <property type="project" value="InterPro"/>
</dbReference>
<dbReference type="GO" id="GO:0016829">
    <property type="term" value="F:lyase activity"/>
    <property type="evidence" value="ECO:0007669"/>
    <property type="project" value="UniProtKB-KW"/>
</dbReference>
<dbReference type="GO" id="GO:0006707">
    <property type="term" value="P:cholesterol catabolic process"/>
    <property type="evidence" value="ECO:0007669"/>
    <property type="project" value="UniProtKB-UniPathway"/>
</dbReference>
<dbReference type="Gene3D" id="3.40.1080.10">
    <property type="entry name" value="Glutaconate Coenzyme A-transferase"/>
    <property type="match status" value="1"/>
</dbReference>
<dbReference type="InterPro" id="IPR004165">
    <property type="entry name" value="CoA_trans_fam_I"/>
</dbReference>
<dbReference type="InterPro" id="IPR037171">
    <property type="entry name" value="NagB/RpiA_transferase-like"/>
</dbReference>
<dbReference type="PANTHER" id="PTHR43293">
    <property type="entry name" value="ACETATE COA-TRANSFERASE YDIF"/>
    <property type="match status" value="1"/>
</dbReference>
<dbReference type="PANTHER" id="PTHR43293:SF3">
    <property type="entry name" value="CHOLESTEROL RING-CLEAVING HYDROLASE IPDB SUBUNIT"/>
    <property type="match status" value="1"/>
</dbReference>
<dbReference type="SMART" id="SM00882">
    <property type="entry name" value="CoA_trans"/>
    <property type="match status" value="1"/>
</dbReference>
<dbReference type="SUPFAM" id="SSF100950">
    <property type="entry name" value="NagB/RpiA/CoA transferase-like"/>
    <property type="match status" value="1"/>
</dbReference>
<feature type="chain" id="PRO_0000426884" description="Cholesterol ring-cleaving hydrolase IpdB subunit">
    <location>
        <begin position="1"/>
        <end position="250"/>
    </location>
</feature>
<protein>
    <recommendedName>
        <fullName evidence="1">Cholesterol ring-cleaving hydrolase IpdB subunit</fullName>
        <ecNumber evidence="1">4.1.99.-</ecNumber>
    </recommendedName>
    <alternativeName>
        <fullName evidence="1">(3E)-2-(2-carboxylatoethyl)-3-methyl-6-oxocyclohex-1-ene-1-carboxyl-CoA hydrolase beta subunit</fullName>
        <shortName evidence="1">COCHEA-CoA hydrolase beta subunit</shortName>
    </alternativeName>
</protein>
<comment type="function">
    <text evidence="1">Involved in the final steps of cholesterol and steroid degradation. Opens the last steroid ring of cholesterol by catalyzing the hydrolysis of (3E)-2-(2-carboxylatoethyl)-3-methyl-6-oxocyclohex-1-ene-1-carboxyl-CoA (COCHEA-CoA) to 6-methyl-3,7-dioxodecanedioyl-CoA (MeDODA-CoA).</text>
</comment>
<comment type="catalytic activity">
    <reaction evidence="1">
        <text>(3E)-2-(2-carboxylatoethyl)-3-methyl-6-oxocyclohex-1-ene-1-carboxyl-CoA + H2O = 6-methyl-3,7-dioxodecanedioyl-CoA</text>
        <dbReference type="Rhea" id="RHEA:66364"/>
        <dbReference type="ChEBI" id="CHEBI:15377"/>
        <dbReference type="ChEBI" id="CHEBI:167101"/>
        <dbReference type="ChEBI" id="CHEBI:167102"/>
    </reaction>
    <physiologicalReaction direction="left-to-right" evidence="1">
        <dbReference type="Rhea" id="RHEA:66365"/>
    </physiologicalReaction>
</comment>
<comment type="pathway">
    <text evidence="1">Steroid metabolism; cholesterol degradation.</text>
</comment>
<comment type="subunit">
    <text evidence="1">Heterotetramer composed of 2 IpdA subunits and 2 IpdB subunits.</text>
</comment>
<comment type="similarity">
    <text evidence="2">Belongs to the 3-oxoacid CoA-transferase subunit B family.</text>
</comment>
<reference key="1">
    <citation type="journal article" date="2002" name="J. Bacteriol.">
        <title>Whole-genome comparison of Mycobacterium tuberculosis clinical and laboratory strains.</title>
        <authorList>
            <person name="Fleischmann R.D."/>
            <person name="Alland D."/>
            <person name="Eisen J.A."/>
            <person name="Carpenter L."/>
            <person name="White O."/>
            <person name="Peterson J.D."/>
            <person name="DeBoy R.T."/>
            <person name="Dodson R.J."/>
            <person name="Gwinn M.L."/>
            <person name="Haft D.H."/>
            <person name="Hickey E.K."/>
            <person name="Kolonay J.F."/>
            <person name="Nelson W.C."/>
            <person name="Umayam L.A."/>
            <person name="Ermolaeva M.D."/>
            <person name="Salzberg S.L."/>
            <person name="Delcher A."/>
            <person name="Utterback T.R."/>
            <person name="Weidman J.F."/>
            <person name="Khouri H.M."/>
            <person name="Gill J."/>
            <person name="Mikula A."/>
            <person name="Bishai W."/>
            <person name="Jacobs W.R. Jr."/>
            <person name="Venter J.C."/>
            <person name="Fraser C.M."/>
        </authorList>
    </citation>
    <scope>NUCLEOTIDE SEQUENCE [LARGE SCALE GENOMIC DNA]</scope>
    <source>
        <strain>CDC 1551 / Oshkosh</strain>
    </source>
</reference>
<proteinExistence type="inferred from homology"/>